<dbReference type="EC" id="2.7.11.32" evidence="1"/>
<dbReference type="EC" id="2.7.4.27" evidence="1"/>
<dbReference type="EMBL" id="CP000449">
    <property type="protein sequence ID" value="ABI67255.1"/>
    <property type="molecule type" value="Genomic_DNA"/>
</dbReference>
<dbReference type="RefSeq" id="WP_011644899.1">
    <property type="nucleotide sequence ID" value="NC_008347.1"/>
</dbReference>
<dbReference type="SMR" id="Q0AKD8"/>
<dbReference type="STRING" id="394221.Mmar10_2974"/>
<dbReference type="KEGG" id="mmr:Mmar10_2974"/>
<dbReference type="eggNOG" id="COG1806">
    <property type="taxonomic scope" value="Bacteria"/>
</dbReference>
<dbReference type="HOGENOM" id="CLU_046206_2_0_5"/>
<dbReference type="OrthoDB" id="9782201at2"/>
<dbReference type="Proteomes" id="UP000001964">
    <property type="component" value="Chromosome"/>
</dbReference>
<dbReference type="GO" id="GO:0043531">
    <property type="term" value="F:ADP binding"/>
    <property type="evidence" value="ECO:0007669"/>
    <property type="project" value="UniProtKB-UniRule"/>
</dbReference>
<dbReference type="GO" id="GO:0005524">
    <property type="term" value="F:ATP binding"/>
    <property type="evidence" value="ECO:0007669"/>
    <property type="project" value="InterPro"/>
</dbReference>
<dbReference type="GO" id="GO:0016776">
    <property type="term" value="F:phosphotransferase activity, phosphate group as acceptor"/>
    <property type="evidence" value="ECO:0007669"/>
    <property type="project" value="UniProtKB-UniRule"/>
</dbReference>
<dbReference type="GO" id="GO:0004674">
    <property type="term" value="F:protein serine/threonine kinase activity"/>
    <property type="evidence" value="ECO:0007669"/>
    <property type="project" value="UniProtKB-UniRule"/>
</dbReference>
<dbReference type="Gene3D" id="3.40.50.300">
    <property type="entry name" value="P-loop containing nucleotide triphosphate hydrolases"/>
    <property type="match status" value="1"/>
</dbReference>
<dbReference type="HAMAP" id="MF_00921">
    <property type="entry name" value="PDRP"/>
    <property type="match status" value="1"/>
</dbReference>
<dbReference type="InterPro" id="IPR005177">
    <property type="entry name" value="Kinase-pyrophosphorylase"/>
</dbReference>
<dbReference type="InterPro" id="IPR027417">
    <property type="entry name" value="P-loop_NTPase"/>
</dbReference>
<dbReference type="InterPro" id="IPR026565">
    <property type="entry name" value="PPDK_reg"/>
</dbReference>
<dbReference type="NCBIfam" id="NF003742">
    <property type="entry name" value="PRK05339.1"/>
    <property type="match status" value="1"/>
</dbReference>
<dbReference type="PANTHER" id="PTHR31756">
    <property type="entry name" value="PYRUVATE, PHOSPHATE DIKINASE REGULATORY PROTEIN 1, CHLOROPLASTIC"/>
    <property type="match status" value="1"/>
</dbReference>
<dbReference type="PANTHER" id="PTHR31756:SF3">
    <property type="entry name" value="PYRUVATE, PHOSPHATE DIKINASE REGULATORY PROTEIN 1, CHLOROPLASTIC"/>
    <property type="match status" value="1"/>
</dbReference>
<dbReference type="Pfam" id="PF03618">
    <property type="entry name" value="Kinase-PPPase"/>
    <property type="match status" value="1"/>
</dbReference>
<organism>
    <name type="scientific">Maricaulis maris (strain MCS10)</name>
    <name type="common">Caulobacter maris</name>
    <dbReference type="NCBI Taxonomy" id="394221"/>
    <lineage>
        <taxon>Bacteria</taxon>
        <taxon>Pseudomonadati</taxon>
        <taxon>Pseudomonadota</taxon>
        <taxon>Alphaproteobacteria</taxon>
        <taxon>Maricaulales</taxon>
        <taxon>Maricaulaceae</taxon>
        <taxon>Maricaulis</taxon>
    </lineage>
</organism>
<gene>
    <name type="ordered locus">Mmar10_2974</name>
</gene>
<reference key="1">
    <citation type="submission" date="2006-08" db="EMBL/GenBank/DDBJ databases">
        <title>Complete sequence of Maricaulis maris MCS10.</title>
        <authorList>
            <consortium name="US DOE Joint Genome Institute"/>
            <person name="Copeland A."/>
            <person name="Lucas S."/>
            <person name="Lapidus A."/>
            <person name="Barry K."/>
            <person name="Detter J.C."/>
            <person name="Glavina del Rio T."/>
            <person name="Hammon N."/>
            <person name="Israni S."/>
            <person name="Dalin E."/>
            <person name="Tice H."/>
            <person name="Pitluck S."/>
            <person name="Saunders E."/>
            <person name="Brettin T."/>
            <person name="Bruce D."/>
            <person name="Han C."/>
            <person name="Tapia R."/>
            <person name="Gilna P."/>
            <person name="Schmutz J."/>
            <person name="Larimer F."/>
            <person name="Land M."/>
            <person name="Hauser L."/>
            <person name="Kyrpides N."/>
            <person name="Mikhailova N."/>
            <person name="Viollier P."/>
            <person name="Stephens C."/>
            <person name="Richardson P."/>
        </authorList>
    </citation>
    <scope>NUCLEOTIDE SEQUENCE [LARGE SCALE GENOMIC DNA]</scope>
    <source>
        <strain>MCS10</strain>
    </source>
</reference>
<sequence length="279" mass="31310">MPPSNSTFDTCFHIHMVSDSTGETLMEVMRASVAQFEGTTPLEHLYALVRSSKQLDRVLDEVEAYPGVIMYTIVNADLRRELETRCVELGVPAIAILDPMLATLSAYLGRPVASRAGAQRSLDADYYRRIDALNYAMAHDDGQGDDFEGADIVLLGVSRTSKTPTSVYLAHRGFRAANIPLVKDVPIPEAVFSLRNPLVVGLTASPERIVQIRRNRLLSLNEDRDTNYIDDFAVREEILFAKRLYAKHKWPTIDVTRRSIEETAAKIINLLMEKRNMTV</sequence>
<protein>
    <recommendedName>
        <fullName evidence="1">Putative pyruvate, phosphate dikinase regulatory protein</fullName>
        <shortName evidence="1">PPDK regulatory protein</shortName>
        <ecNumber evidence="1">2.7.11.32</ecNumber>
        <ecNumber evidence="1">2.7.4.27</ecNumber>
    </recommendedName>
</protein>
<accession>Q0AKD8</accession>
<comment type="function">
    <text evidence="1">Bifunctional serine/threonine kinase and phosphorylase involved in the regulation of the pyruvate, phosphate dikinase (PPDK) by catalyzing its phosphorylation/dephosphorylation.</text>
</comment>
<comment type="catalytic activity">
    <reaction evidence="1">
        <text>N(tele)-phospho-L-histidyl/L-threonyl-[pyruvate, phosphate dikinase] + ADP = N(tele)-phospho-L-histidyl/O-phospho-L-threonyl-[pyruvate, phosphate dikinase] + AMP + H(+)</text>
        <dbReference type="Rhea" id="RHEA:43692"/>
        <dbReference type="Rhea" id="RHEA-COMP:10650"/>
        <dbReference type="Rhea" id="RHEA-COMP:10651"/>
        <dbReference type="ChEBI" id="CHEBI:15378"/>
        <dbReference type="ChEBI" id="CHEBI:30013"/>
        <dbReference type="ChEBI" id="CHEBI:61977"/>
        <dbReference type="ChEBI" id="CHEBI:83586"/>
        <dbReference type="ChEBI" id="CHEBI:456215"/>
        <dbReference type="ChEBI" id="CHEBI:456216"/>
        <dbReference type="EC" id="2.7.11.32"/>
    </reaction>
</comment>
<comment type="catalytic activity">
    <reaction evidence="1">
        <text>N(tele)-phospho-L-histidyl/O-phospho-L-threonyl-[pyruvate, phosphate dikinase] + phosphate + H(+) = N(tele)-phospho-L-histidyl/L-threonyl-[pyruvate, phosphate dikinase] + diphosphate</text>
        <dbReference type="Rhea" id="RHEA:43696"/>
        <dbReference type="Rhea" id="RHEA-COMP:10650"/>
        <dbReference type="Rhea" id="RHEA-COMP:10651"/>
        <dbReference type="ChEBI" id="CHEBI:15378"/>
        <dbReference type="ChEBI" id="CHEBI:30013"/>
        <dbReference type="ChEBI" id="CHEBI:33019"/>
        <dbReference type="ChEBI" id="CHEBI:43474"/>
        <dbReference type="ChEBI" id="CHEBI:61977"/>
        <dbReference type="ChEBI" id="CHEBI:83586"/>
        <dbReference type="EC" id="2.7.4.27"/>
    </reaction>
</comment>
<comment type="similarity">
    <text evidence="1">Belongs to the pyruvate, phosphate/water dikinase regulatory protein family. PDRP subfamily.</text>
</comment>
<evidence type="ECO:0000255" key="1">
    <source>
        <dbReference type="HAMAP-Rule" id="MF_00921"/>
    </source>
</evidence>
<keyword id="KW-0418">Kinase</keyword>
<keyword id="KW-0547">Nucleotide-binding</keyword>
<keyword id="KW-1185">Reference proteome</keyword>
<keyword id="KW-0723">Serine/threonine-protein kinase</keyword>
<keyword id="KW-0808">Transferase</keyword>
<feature type="chain" id="PRO_0000316697" description="Putative pyruvate, phosphate dikinase regulatory protein">
    <location>
        <begin position="1"/>
        <end position="279"/>
    </location>
</feature>
<feature type="binding site" evidence="1">
    <location>
        <begin position="156"/>
        <end position="163"/>
    </location>
    <ligand>
        <name>ADP</name>
        <dbReference type="ChEBI" id="CHEBI:456216"/>
    </ligand>
</feature>
<proteinExistence type="inferred from homology"/>
<name>PDRP_MARMM</name>